<accession>P46402</accession>
<gene>
    <name type="primary">IFNG</name>
</gene>
<organism>
    <name type="scientific">Felis catus</name>
    <name type="common">Cat</name>
    <name type="synonym">Felis silvestris catus</name>
    <dbReference type="NCBI Taxonomy" id="9685"/>
    <lineage>
        <taxon>Eukaryota</taxon>
        <taxon>Metazoa</taxon>
        <taxon>Chordata</taxon>
        <taxon>Craniata</taxon>
        <taxon>Vertebrata</taxon>
        <taxon>Euteleostomi</taxon>
        <taxon>Mammalia</taxon>
        <taxon>Eutheria</taxon>
        <taxon>Laurasiatheria</taxon>
        <taxon>Carnivora</taxon>
        <taxon>Feliformia</taxon>
        <taxon>Felidae</taxon>
        <taxon>Felinae</taxon>
        <taxon>Felis</taxon>
    </lineage>
</organism>
<feature type="signal peptide" evidence="1">
    <location>
        <begin position="1"/>
        <end position="23"/>
    </location>
</feature>
<feature type="chain" id="PRO_0000016442" description="Interferon gamma">
    <location>
        <begin position="24"/>
        <end position="167"/>
    </location>
</feature>
<feature type="modified residue" description="Pyrrolidone carboxylic acid" evidence="2">
    <location>
        <position position="24"/>
    </location>
</feature>
<feature type="glycosylation site" description="N-linked (GlcNAc...) asparagine" evidence="4">
    <location>
        <position position="39"/>
    </location>
</feature>
<feature type="glycosylation site" description="N-linked (GlcNAc...) asparagine" evidence="4">
    <location>
        <position position="107"/>
    </location>
</feature>
<name>IFNG_FELCA</name>
<keyword id="KW-0051">Antiviral defense</keyword>
<keyword id="KW-0202">Cytokine</keyword>
<keyword id="KW-0325">Glycoprotein</keyword>
<keyword id="KW-0341">Growth regulation</keyword>
<keyword id="KW-0873">Pyrrolidone carboxylic acid</keyword>
<keyword id="KW-1185">Reference proteome</keyword>
<keyword id="KW-0964">Secreted</keyword>
<keyword id="KW-0732">Signal</keyword>
<sequence length="167" mass="19623">MNYTSFIFAFQLCIILCSSGYYCQAMFFKEIEELKGYFNASNPDVADGGSLFVDILKNWKEESDKTIIQSQIVSFYLKMFENLKDDDQRIQRSMDTIKEDMLDKLLNTSSSKRDDFLKLIQIPVNDLQVQRKAINELFKVMNDLSPRSNLRKRKRSQNLFRGRRASK</sequence>
<proteinExistence type="evidence at transcript level"/>
<protein>
    <recommendedName>
        <fullName>Interferon gamma</fullName>
        <shortName>IFN-gamma</shortName>
    </recommendedName>
</protein>
<comment type="function">
    <text evidence="2 3">Type II interferon produced by immune cells such as T-cells and NK cells that plays crucial roles in antimicrobial, antiviral, and antitumor responses by activating effector immune cells and enhancing antigen presentation. Primarily signals through the JAK-STAT pathway after interaction with its receptor IFNGR1 to affect gene regulation. Upon IFNG binding, IFNGR1 intracellular domain opens out to allow association of downstream signaling components JAK2, JAK1 and STAT1, leading to STAT1 activation, nuclear translocation and transcription of IFNG-regulated genes. Many of the induced genes are transcription factors such as IRF1 that are able to further drive regulation of a next wave of transcription. Plays a role in class I antigen presentation pathway by inducing a replacement of catalytic proteasome subunits with immunoproteasome subunits. In turn, increases the quantity, quality, and repertoire of peptides for class I MHC loading. Increases the efficiency of peptide generation also by inducing the expression of activator PA28 that associates with the proteasome and alters its proteolytic cleavage preference. Up-regulates as well MHC II complexes on the cell surface by promoting expression of several key molecules such as cathepsins B/CTSB, H/CTSH, and L/CTSL (By similarity). Participates in the regulation of hematopoietic stem cells during development and under homeostatic conditions by affecting their development, quiescence, and differentiation (By similarity).</text>
</comment>
<comment type="subunit">
    <text evidence="2">Homodimer. Interacts with IFNGR1 (via extracellular domain); this interaction promotes IFNGR1 dimerization.</text>
</comment>
<comment type="subcellular location">
    <subcellularLocation>
        <location evidence="2">Secreted</location>
    </subcellularLocation>
</comment>
<comment type="tissue specificity">
    <text>Released primarily from activated T lymphocytes.</text>
</comment>
<comment type="similarity">
    <text evidence="5">Belongs to the type II (or gamma) interferon family.</text>
</comment>
<evidence type="ECO:0000250" key="1"/>
<evidence type="ECO:0000250" key="2">
    <source>
        <dbReference type="UniProtKB" id="P01579"/>
    </source>
</evidence>
<evidence type="ECO:0000250" key="3">
    <source>
        <dbReference type="UniProtKB" id="P01580"/>
    </source>
</evidence>
<evidence type="ECO:0000255" key="4"/>
<evidence type="ECO:0000305" key="5"/>
<reference key="1">
    <citation type="journal article" date="1995" name="DNA Seq.">
        <title>Nucleotide and predicted peptide sequence of feline interferon-gamma (IFN-gamma).</title>
        <authorList>
            <person name="Argyle D.J."/>
            <person name="Smith K."/>
            <person name="McBride K."/>
            <person name="Fulton R."/>
            <person name="Onions D.E."/>
        </authorList>
    </citation>
    <scope>NUCLEOTIDE SEQUENCE [MRNA]</scope>
    <source>
        <tissue>Lymph node</tissue>
    </source>
</reference>
<reference key="2">
    <citation type="journal article" date="1995" name="Immunogenetics">
        <title>Molecular cloning and expression of cat interferon-gamma.</title>
        <authorList>
            <person name="Schijns V.E.C.J."/>
            <person name="Wierda C.M.H."/>
            <person name="Vahlenkamp T.W."/>
            <person name="Horzinek M.C."/>
            <person name="de Groot R.J."/>
        </authorList>
    </citation>
    <scope>NUCLEOTIDE SEQUENCE [GENOMIC DNA]</scope>
</reference>
<dbReference type="EMBL" id="D30619">
    <property type="protein sequence ID" value="BAA06309.1"/>
    <property type="molecule type" value="mRNA"/>
</dbReference>
<dbReference type="EMBL" id="X86972">
    <property type="protein sequence ID" value="CAA60535.1"/>
    <property type="molecule type" value="Genomic_DNA"/>
</dbReference>
<dbReference type="PIR" id="S57644">
    <property type="entry name" value="S57644"/>
</dbReference>
<dbReference type="RefSeq" id="NP_001009873.1">
    <property type="nucleotide sequence ID" value="NM_001009873.1"/>
</dbReference>
<dbReference type="SMR" id="P46402"/>
<dbReference type="FunCoup" id="P46402">
    <property type="interactions" value="53"/>
</dbReference>
<dbReference type="STRING" id="9685.ENSFCAP00000008355"/>
<dbReference type="GlyCosmos" id="P46402">
    <property type="glycosylation" value="2 sites, No reported glycans"/>
</dbReference>
<dbReference type="PaxDb" id="9685-ENSFCAP00000008355"/>
<dbReference type="Ensembl" id="ENSFCAT00000009016.4">
    <property type="protein sequence ID" value="ENSFCAP00000008355.2"/>
    <property type="gene ID" value="ENSFCAG00000009014.4"/>
</dbReference>
<dbReference type="GeneID" id="493965"/>
<dbReference type="KEGG" id="fca:493965"/>
<dbReference type="CTD" id="3458"/>
<dbReference type="VGNC" id="VGNC:67703">
    <property type="gene designation" value="IFNG"/>
</dbReference>
<dbReference type="eggNOG" id="ENOG502SBGW">
    <property type="taxonomic scope" value="Eukaryota"/>
</dbReference>
<dbReference type="GeneTree" id="ENSGT00390000007831"/>
<dbReference type="HOGENOM" id="CLU_135106_0_0_1"/>
<dbReference type="InParanoid" id="P46402"/>
<dbReference type="OMA" id="QIVSMYL"/>
<dbReference type="OrthoDB" id="9937106at2759"/>
<dbReference type="TreeFam" id="TF336308"/>
<dbReference type="Proteomes" id="UP000011712">
    <property type="component" value="Chromosome B4"/>
</dbReference>
<dbReference type="Bgee" id="ENSFCAG00000009014">
    <property type="expression patterns" value="Expressed in liver and 1 other cell type or tissue"/>
</dbReference>
<dbReference type="GO" id="GO:0005615">
    <property type="term" value="C:extracellular space"/>
    <property type="evidence" value="ECO:0000318"/>
    <property type="project" value="GO_Central"/>
</dbReference>
<dbReference type="GO" id="GO:0005125">
    <property type="term" value="F:cytokine activity"/>
    <property type="evidence" value="ECO:0000318"/>
    <property type="project" value="GO_Central"/>
</dbReference>
<dbReference type="GO" id="GO:0005133">
    <property type="term" value="F:type II interferon receptor binding"/>
    <property type="evidence" value="ECO:0007669"/>
    <property type="project" value="InterPro"/>
</dbReference>
<dbReference type="GO" id="GO:0002250">
    <property type="term" value="P:adaptive immune response"/>
    <property type="evidence" value="ECO:0000318"/>
    <property type="project" value="GO_Central"/>
</dbReference>
<dbReference type="GO" id="GO:0048143">
    <property type="term" value="P:astrocyte activation"/>
    <property type="evidence" value="ECO:0007669"/>
    <property type="project" value="Ensembl"/>
</dbReference>
<dbReference type="GO" id="GO:0097696">
    <property type="term" value="P:cell surface receptor signaling pathway via STAT"/>
    <property type="evidence" value="ECO:0007669"/>
    <property type="project" value="Ensembl"/>
</dbReference>
<dbReference type="GO" id="GO:0051607">
    <property type="term" value="P:defense response to virus"/>
    <property type="evidence" value="ECO:0007669"/>
    <property type="project" value="UniProtKB-KW"/>
</dbReference>
<dbReference type="GO" id="GO:0097191">
    <property type="term" value="P:extrinsic apoptotic signaling pathway"/>
    <property type="evidence" value="ECO:0007669"/>
    <property type="project" value="Ensembl"/>
</dbReference>
<dbReference type="GO" id="GO:0038096">
    <property type="term" value="P:Fc-gamma receptor signaling pathway involved in phagocytosis"/>
    <property type="evidence" value="ECO:0007669"/>
    <property type="project" value="Ensembl"/>
</dbReference>
<dbReference type="GO" id="GO:0006959">
    <property type="term" value="P:humoral immune response"/>
    <property type="evidence" value="ECO:0000318"/>
    <property type="project" value="GO_Central"/>
</dbReference>
<dbReference type="GO" id="GO:0002281">
    <property type="term" value="P:macrophage activation involved in immune response"/>
    <property type="evidence" value="ECO:0007669"/>
    <property type="project" value="Ensembl"/>
</dbReference>
<dbReference type="GO" id="GO:0030225">
    <property type="term" value="P:macrophage differentiation"/>
    <property type="evidence" value="ECO:0007669"/>
    <property type="project" value="Ensembl"/>
</dbReference>
<dbReference type="GO" id="GO:0001774">
    <property type="term" value="P:microglial cell activation"/>
    <property type="evidence" value="ECO:0007669"/>
    <property type="project" value="Ensembl"/>
</dbReference>
<dbReference type="GO" id="GO:0045892">
    <property type="term" value="P:negative regulation of DNA-templated transcription"/>
    <property type="evidence" value="ECO:0007669"/>
    <property type="project" value="Ensembl"/>
</dbReference>
<dbReference type="GO" id="GO:0032700">
    <property type="term" value="P:negative regulation of interleukin-17 production"/>
    <property type="evidence" value="ECO:0007669"/>
    <property type="project" value="Ensembl"/>
</dbReference>
<dbReference type="GO" id="GO:0048662">
    <property type="term" value="P:negative regulation of smooth muscle cell proliferation"/>
    <property type="evidence" value="ECO:0007669"/>
    <property type="project" value="Ensembl"/>
</dbReference>
<dbReference type="GO" id="GO:1902004">
    <property type="term" value="P:positive regulation of amyloid-beta formation"/>
    <property type="evidence" value="ECO:0007669"/>
    <property type="project" value="Ensembl"/>
</dbReference>
<dbReference type="GO" id="GO:0010508">
    <property type="term" value="P:positive regulation of autophagy"/>
    <property type="evidence" value="ECO:0000250"/>
    <property type="project" value="UniProtKB"/>
</dbReference>
<dbReference type="GO" id="GO:0032834">
    <property type="term" value="P:positive regulation of CD4-positive, CD25-positive, alpha-beta regulatory T cell differentiation involved in immune response"/>
    <property type="evidence" value="ECO:0007669"/>
    <property type="project" value="Ensembl"/>
</dbReference>
<dbReference type="GO" id="GO:0032722">
    <property type="term" value="P:positive regulation of chemokine production"/>
    <property type="evidence" value="ECO:0007669"/>
    <property type="project" value="Ensembl"/>
</dbReference>
<dbReference type="GO" id="GO:0010634">
    <property type="term" value="P:positive regulation of epithelial cell migration"/>
    <property type="evidence" value="ECO:0007669"/>
    <property type="project" value="Ensembl"/>
</dbReference>
<dbReference type="GO" id="GO:0060552">
    <property type="term" value="P:positive regulation of fructose 1,6-bisphosphate metabolic process"/>
    <property type="evidence" value="ECO:0007669"/>
    <property type="project" value="Ensembl"/>
</dbReference>
<dbReference type="GO" id="GO:0050729">
    <property type="term" value="P:positive regulation of inflammatory response"/>
    <property type="evidence" value="ECO:0007669"/>
    <property type="project" value="Ensembl"/>
</dbReference>
<dbReference type="GO" id="GO:0032735">
    <property type="term" value="P:positive regulation of interleukin-12 production"/>
    <property type="evidence" value="ECO:0007669"/>
    <property type="project" value="Ensembl"/>
</dbReference>
<dbReference type="GO" id="GO:0032747">
    <property type="term" value="P:positive regulation of interleukin-23 production"/>
    <property type="evidence" value="ECO:0007669"/>
    <property type="project" value="Ensembl"/>
</dbReference>
<dbReference type="GO" id="GO:0032755">
    <property type="term" value="P:positive regulation of interleukin-6 production"/>
    <property type="evidence" value="ECO:0007669"/>
    <property type="project" value="Ensembl"/>
</dbReference>
<dbReference type="GO" id="GO:0051044">
    <property type="term" value="P:positive regulation of membrane protein ectodomain proteolysis"/>
    <property type="evidence" value="ECO:0007669"/>
    <property type="project" value="Ensembl"/>
</dbReference>
<dbReference type="GO" id="GO:0050769">
    <property type="term" value="P:positive regulation of neurogenesis"/>
    <property type="evidence" value="ECO:0007669"/>
    <property type="project" value="Ensembl"/>
</dbReference>
<dbReference type="GO" id="GO:0045429">
    <property type="term" value="P:positive regulation of nitric oxide biosynthetic process"/>
    <property type="evidence" value="ECO:0007669"/>
    <property type="project" value="Ensembl"/>
</dbReference>
<dbReference type="GO" id="GO:0045672">
    <property type="term" value="P:positive regulation of osteoclast differentiation"/>
    <property type="evidence" value="ECO:0007669"/>
    <property type="project" value="Ensembl"/>
</dbReference>
<dbReference type="GO" id="GO:0042307">
    <property type="term" value="P:positive regulation of protein import into nucleus"/>
    <property type="evidence" value="ECO:0007669"/>
    <property type="project" value="Ensembl"/>
</dbReference>
<dbReference type="GO" id="GO:0031334">
    <property type="term" value="P:positive regulation of protein-containing complex assembly"/>
    <property type="evidence" value="ECO:0007669"/>
    <property type="project" value="Ensembl"/>
</dbReference>
<dbReference type="GO" id="GO:0034393">
    <property type="term" value="P:positive regulation of smooth muscle cell apoptotic process"/>
    <property type="evidence" value="ECO:0007669"/>
    <property type="project" value="Ensembl"/>
</dbReference>
<dbReference type="GO" id="GO:2000309">
    <property type="term" value="P:positive regulation of tumor necrosis factor (ligand) superfamily member 11 production"/>
    <property type="evidence" value="ECO:0007669"/>
    <property type="project" value="Ensembl"/>
</dbReference>
<dbReference type="GO" id="GO:0060557">
    <property type="term" value="P:positive regulation of vitamin D biosynthetic process"/>
    <property type="evidence" value="ECO:0007669"/>
    <property type="project" value="Ensembl"/>
</dbReference>
<dbReference type="GO" id="GO:0050796">
    <property type="term" value="P:regulation of insulin secretion"/>
    <property type="evidence" value="ECO:0007669"/>
    <property type="project" value="Ensembl"/>
</dbReference>
<dbReference type="GO" id="GO:0060333">
    <property type="term" value="P:type II interferon-mediated signaling pathway"/>
    <property type="evidence" value="ECO:0007669"/>
    <property type="project" value="Ensembl"/>
</dbReference>
<dbReference type="GO" id="GO:0038196">
    <property type="term" value="P:type III interferon-mediated signaling pathway"/>
    <property type="evidence" value="ECO:0007669"/>
    <property type="project" value="Ensembl"/>
</dbReference>
<dbReference type="FunFam" id="1.20.1250.10:FF:000007">
    <property type="entry name" value="Interferon gamma"/>
    <property type="match status" value="1"/>
</dbReference>
<dbReference type="Gene3D" id="1.20.1250.10">
    <property type="match status" value="1"/>
</dbReference>
<dbReference type="InterPro" id="IPR009079">
    <property type="entry name" value="4_helix_cytokine-like_core"/>
</dbReference>
<dbReference type="InterPro" id="IPR002069">
    <property type="entry name" value="Interferon_gamma"/>
</dbReference>
<dbReference type="PANTHER" id="PTHR11419">
    <property type="entry name" value="INTERFERON GAMMA"/>
    <property type="match status" value="1"/>
</dbReference>
<dbReference type="PANTHER" id="PTHR11419:SF0">
    <property type="entry name" value="INTERFERON GAMMA"/>
    <property type="match status" value="1"/>
</dbReference>
<dbReference type="Pfam" id="PF00714">
    <property type="entry name" value="IFN-gamma"/>
    <property type="match status" value="1"/>
</dbReference>
<dbReference type="PIRSF" id="PIRSF001936">
    <property type="entry name" value="IFN-gamma"/>
    <property type="match status" value="1"/>
</dbReference>
<dbReference type="SUPFAM" id="SSF47266">
    <property type="entry name" value="4-helical cytokines"/>
    <property type="match status" value="1"/>
</dbReference>